<reference key="1">
    <citation type="submission" date="2007-06" db="EMBL/GenBank/DDBJ databases">
        <authorList>
            <person name="Brinkac L.M."/>
            <person name="Daugherty S."/>
            <person name="Dodson R.J."/>
            <person name="Madupu R."/>
            <person name="Brown J.L."/>
            <person name="Bruce D."/>
            <person name="Detter C."/>
            <person name="Munk C."/>
            <person name="Smith L.A."/>
            <person name="Smith T.J."/>
            <person name="White O."/>
            <person name="Brettin T.S."/>
        </authorList>
    </citation>
    <scope>NUCLEOTIDE SEQUENCE [LARGE SCALE GENOMIC DNA]</scope>
    <source>
        <strain>Langeland / NCTC 10281 / Type F</strain>
    </source>
</reference>
<dbReference type="EC" id="2.7.4.3" evidence="1"/>
<dbReference type="EMBL" id="CP000728">
    <property type="protein sequence ID" value="ABS41780.1"/>
    <property type="molecule type" value="Genomic_DNA"/>
</dbReference>
<dbReference type="RefSeq" id="WP_012101128.1">
    <property type="nucleotide sequence ID" value="NC_009699.1"/>
</dbReference>
<dbReference type="SMR" id="A7GJ53"/>
<dbReference type="KEGG" id="cbf:CLI_3642"/>
<dbReference type="HOGENOM" id="CLU_032354_1_2_9"/>
<dbReference type="UniPathway" id="UPA00588">
    <property type="reaction ID" value="UER00649"/>
</dbReference>
<dbReference type="Proteomes" id="UP000002410">
    <property type="component" value="Chromosome"/>
</dbReference>
<dbReference type="GO" id="GO:0005737">
    <property type="term" value="C:cytoplasm"/>
    <property type="evidence" value="ECO:0007669"/>
    <property type="project" value="UniProtKB-SubCell"/>
</dbReference>
<dbReference type="GO" id="GO:0004017">
    <property type="term" value="F:adenylate kinase activity"/>
    <property type="evidence" value="ECO:0007669"/>
    <property type="project" value="UniProtKB-UniRule"/>
</dbReference>
<dbReference type="GO" id="GO:0005524">
    <property type="term" value="F:ATP binding"/>
    <property type="evidence" value="ECO:0007669"/>
    <property type="project" value="UniProtKB-UniRule"/>
</dbReference>
<dbReference type="GO" id="GO:0008270">
    <property type="term" value="F:zinc ion binding"/>
    <property type="evidence" value="ECO:0007669"/>
    <property type="project" value="UniProtKB-UniRule"/>
</dbReference>
<dbReference type="GO" id="GO:0044209">
    <property type="term" value="P:AMP salvage"/>
    <property type="evidence" value="ECO:0007669"/>
    <property type="project" value="UniProtKB-UniRule"/>
</dbReference>
<dbReference type="CDD" id="cd01428">
    <property type="entry name" value="ADK"/>
    <property type="match status" value="1"/>
</dbReference>
<dbReference type="FunFam" id="3.40.50.300:FF:000106">
    <property type="entry name" value="Adenylate kinase mitochondrial"/>
    <property type="match status" value="1"/>
</dbReference>
<dbReference type="Gene3D" id="3.40.50.300">
    <property type="entry name" value="P-loop containing nucleotide triphosphate hydrolases"/>
    <property type="match status" value="1"/>
</dbReference>
<dbReference type="HAMAP" id="MF_00235">
    <property type="entry name" value="Adenylate_kinase_Adk"/>
    <property type="match status" value="1"/>
</dbReference>
<dbReference type="InterPro" id="IPR006259">
    <property type="entry name" value="Adenyl_kin_sub"/>
</dbReference>
<dbReference type="InterPro" id="IPR000850">
    <property type="entry name" value="Adenylat/UMP-CMP_kin"/>
</dbReference>
<dbReference type="InterPro" id="IPR033690">
    <property type="entry name" value="Adenylat_kinase_CS"/>
</dbReference>
<dbReference type="InterPro" id="IPR007862">
    <property type="entry name" value="Adenylate_kinase_lid-dom"/>
</dbReference>
<dbReference type="InterPro" id="IPR027417">
    <property type="entry name" value="P-loop_NTPase"/>
</dbReference>
<dbReference type="NCBIfam" id="TIGR01351">
    <property type="entry name" value="adk"/>
    <property type="match status" value="1"/>
</dbReference>
<dbReference type="NCBIfam" id="NF001379">
    <property type="entry name" value="PRK00279.1-1"/>
    <property type="match status" value="1"/>
</dbReference>
<dbReference type="NCBIfam" id="NF001380">
    <property type="entry name" value="PRK00279.1-2"/>
    <property type="match status" value="1"/>
</dbReference>
<dbReference type="NCBIfam" id="NF001381">
    <property type="entry name" value="PRK00279.1-3"/>
    <property type="match status" value="1"/>
</dbReference>
<dbReference type="NCBIfam" id="NF011100">
    <property type="entry name" value="PRK14527.1"/>
    <property type="match status" value="1"/>
</dbReference>
<dbReference type="PANTHER" id="PTHR23359">
    <property type="entry name" value="NUCLEOTIDE KINASE"/>
    <property type="match status" value="1"/>
</dbReference>
<dbReference type="Pfam" id="PF00406">
    <property type="entry name" value="ADK"/>
    <property type="match status" value="1"/>
</dbReference>
<dbReference type="Pfam" id="PF05191">
    <property type="entry name" value="ADK_lid"/>
    <property type="match status" value="1"/>
</dbReference>
<dbReference type="PRINTS" id="PR00094">
    <property type="entry name" value="ADENYLTKNASE"/>
</dbReference>
<dbReference type="SUPFAM" id="SSF52540">
    <property type="entry name" value="P-loop containing nucleoside triphosphate hydrolases"/>
    <property type="match status" value="1"/>
</dbReference>
<dbReference type="PROSITE" id="PS00113">
    <property type="entry name" value="ADENYLATE_KINASE"/>
    <property type="match status" value="1"/>
</dbReference>
<keyword id="KW-0067">ATP-binding</keyword>
<keyword id="KW-0963">Cytoplasm</keyword>
<keyword id="KW-0418">Kinase</keyword>
<keyword id="KW-0479">Metal-binding</keyword>
<keyword id="KW-0545">Nucleotide biosynthesis</keyword>
<keyword id="KW-0547">Nucleotide-binding</keyword>
<keyword id="KW-0808">Transferase</keyword>
<keyword id="KW-0862">Zinc</keyword>
<gene>
    <name evidence="1" type="primary">adk</name>
    <name type="ordered locus">CLI_3642</name>
</gene>
<protein>
    <recommendedName>
        <fullName evidence="1">Adenylate kinase</fullName>
        <shortName evidence="1">AK</shortName>
        <ecNumber evidence="1">2.7.4.3</ecNumber>
    </recommendedName>
    <alternativeName>
        <fullName evidence="1">ATP-AMP transphosphorylase</fullName>
    </alternativeName>
    <alternativeName>
        <fullName evidence="1">ATP:AMP phosphotransferase</fullName>
    </alternativeName>
    <alternativeName>
        <fullName evidence="1">Adenylate monophosphate kinase</fullName>
    </alternativeName>
</protein>
<proteinExistence type="inferred from homology"/>
<sequence>MRIILLGPPGAGKGTQAKLISEKFSIPHISTGDIFRANIKEKTPLGIEAKRYIDNGQLVPDEVTIGIVKDRLTKDDCDNGFLLDGFPRTVAQAEALDEFLKGINKELDVALLIKVPEEFILERMTGRRVCTSCGASYHIRFNPPKIEGKCDICDNELIQRKDDTEATVKERLEVYSKQTYPLINYYKDNGIISEVNGTESINEVFGNISNILGRDK</sequence>
<evidence type="ECO:0000255" key="1">
    <source>
        <dbReference type="HAMAP-Rule" id="MF_00235"/>
    </source>
</evidence>
<name>KAD_CLOBL</name>
<feature type="chain" id="PRO_1000021720" description="Adenylate kinase">
    <location>
        <begin position="1"/>
        <end position="216"/>
    </location>
</feature>
<feature type="region of interest" description="NMP" evidence="1">
    <location>
        <begin position="30"/>
        <end position="59"/>
    </location>
</feature>
<feature type="region of interest" description="LID" evidence="1">
    <location>
        <begin position="126"/>
        <end position="163"/>
    </location>
</feature>
<feature type="binding site" evidence="1">
    <location>
        <begin position="10"/>
        <end position="15"/>
    </location>
    <ligand>
        <name>ATP</name>
        <dbReference type="ChEBI" id="CHEBI:30616"/>
    </ligand>
</feature>
<feature type="binding site" evidence="1">
    <location>
        <position position="31"/>
    </location>
    <ligand>
        <name>AMP</name>
        <dbReference type="ChEBI" id="CHEBI:456215"/>
    </ligand>
</feature>
<feature type="binding site" evidence="1">
    <location>
        <position position="36"/>
    </location>
    <ligand>
        <name>AMP</name>
        <dbReference type="ChEBI" id="CHEBI:456215"/>
    </ligand>
</feature>
<feature type="binding site" evidence="1">
    <location>
        <begin position="57"/>
        <end position="59"/>
    </location>
    <ligand>
        <name>AMP</name>
        <dbReference type="ChEBI" id="CHEBI:456215"/>
    </ligand>
</feature>
<feature type="binding site" evidence="1">
    <location>
        <begin position="85"/>
        <end position="88"/>
    </location>
    <ligand>
        <name>AMP</name>
        <dbReference type="ChEBI" id="CHEBI:456215"/>
    </ligand>
</feature>
<feature type="binding site" evidence="1">
    <location>
        <position position="92"/>
    </location>
    <ligand>
        <name>AMP</name>
        <dbReference type="ChEBI" id="CHEBI:456215"/>
    </ligand>
</feature>
<feature type="binding site" evidence="1">
    <location>
        <position position="127"/>
    </location>
    <ligand>
        <name>ATP</name>
        <dbReference type="ChEBI" id="CHEBI:30616"/>
    </ligand>
</feature>
<feature type="binding site" evidence="1">
    <location>
        <position position="130"/>
    </location>
    <ligand>
        <name>Zn(2+)</name>
        <dbReference type="ChEBI" id="CHEBI:29105"/>
        <note>structural</note>
    </ligand>
</feature>
<feature type="binding site" evidence="1">
    <location>
        <position position="133"/>
    </location>
    <ligand>
        <name>Zn(2+)</name>
        <dbReference type="ChEBI" id="CHEBI:29105"/>
        <note>structural</note>
    </ligand>
</feature>
<feature type="binding site" evidence="1">
    <location>
        <begin position="136"/>
        <end position="137"/>
    </location>
    <ligand>
        <name>ATP</name>
        <dbReference type="ChEBI" id="CHEBI:30616"/>
    </ligand>
</feature>
<feature type="binding site" evidence="1">
    <location>
        <position position="150"/>
    </location>
    <ligand>
        <name>Zn(2+)</name>
        <dbReference type="ChEBI" id="CHEBI:29105"/>
        <note>structural</note>
    </ligand>
</feature>
<feature type="binding site" evidence="1">
    <location>
        <position position="153"/>
    </location>
    <ligand>
        <name>Zn(2+)</name>
        <dbReference type="ChEBI" id="CHEBI:29105"/>
        <note>structural</note>
    </ligand>
</feature>
<feature type="binding site" evidence="1">
    <location>
        <position position="160"/>
    </location>
    <ligand>
        <name>AMP</name>
        <dbReference type="ChEBI" id="CHEBI:456215"/>
    </ligand>
</feature>
<feature type="binding site" evidence="1">
    <location>
        <position position="171"/>
    </location>
    <ligand>
        <name>AMP</name>
        <dbReference type="ChEBI" id="CHEBI:456215"/>
    </ligand>
</feature>
<feature type="binding site" evidence="1">
    <location>
        <position position="199"/>
    </location>
    <ligand>
        <name>ATP</name>
        <dbReference type="ChEBI" id="CHEBI:30616"/>
    </ligand>
</feature>
<accession>A7GJ53</accession>
<comment type="function">
    <text evidence="1">Catalyzes the reversible transfer of the terminal phosphate group between ATP and AMP. Plays an important role in cellular energy homeostasis and in adenine nucleotide metabolism.</text>
</comment>
<comment type="catalytic activity">
    <reaction evidence="1">
        <text>AMP + ATP = 2 ADP</text>
        <dbReference type="Rhea" id="RHEA:12973"/>
        <dbReference type="ChEBI" id="CHEBI:30616"/>
        <dbReference type="ChEBI" id="CHEBI:456215"/>
        <dbReference type="ChEBI" id="CHEBI:456216"/>
        <dbReference type="EC" id="2.7.4.3"/>
    </reaction>
</comment>
<comment type="pathway">
    <text evidence="1">Purine metabolism; AMP biosynthesis via salvage pathway; AMP from ADP: step 1/1.</text>
</comment>
<comment type="subunit">
    <text evidence="1">Monomer.</text>
</comment>
<comment type="subcellular location">
    <subcellularLocation>
        <location evidence="1">Cytoplasm</location>
    </subcellularLocation>
</comment>
<comment type="domain">
    <text evidence="1">Consists of three domains, a large central CORE domain and two small peripheral domains, NMPbind and LID, which undergo movements during catalysis. The LID domain closes over the site of phosphoryl transfer upon ATP binding. Assembling and dissambling the active center during each catalytic cycle provides an effective means to prevent ATP hydrolysis. Some bacteria have evolved a zinc-coordinating structure that stabilizes the LID domain.</text>
</comment>
<comment type="similarity">
    <text evidence="1">Belongs to the adenylate kinase family.</text>
</comment>
<organism>
    <name type="scientific">Clostridium botulinum (strain Langeland / NCTC 10281 / Type F)</name>
    <dbReference type="NCBI Taxonomy" id="441772"/>
    <lineage>
        <taxon>Bacteria</taxon>
        <taxon>Bacillati</taxon>
        <taxon>Bacillota</taxon>
        <taxon>Clostridia</taxon>
        <taxon>Eubacteriales</taxon>
        <taxon>Clostridiaceae</taxon>
        <taxon>Clostridium</taxon>
    </lineage>
</organism>